<name>ILDR2_MOUSE</name>
<proteinExistence type="evidence at protein level"/>
<feature type="signal peptide" evidence="2">
    <location>
        <begin position="1"/>
        <end position="35"/>
    </location>
</feature>
<feature type="chain" id="PRO_0000425154" description="Immunoglobulin-like domain-containing receptor 2">
    <location>
        <begin position="36"/>
        <end position="661"/>
    </location>
</feature>
<feature type="topological domain" description="Lumenal" evidence="2">
    <location>
        <begin position="36"/>
        <end position="201"/>
    </location>
</feature>
<feature type="transmembrane region" description="Helical" evidence="2">
    <location>
        <begin position="202"/>
        <end position="222"/>
    </location>
</feature>
<feature type="topological domain" description="Cytoplasmic" evidence="2">
    <location>
        <begin position="223"/>
        <end position="661"/>
    </location>
</feature>
<feature type="domain" description="Ig-like V-type">
    <location>
        <begin position="36"/>
        <end position="177"/>
    </location>
</feature>
<feature type="region of interest" description="Disordered" evidence="3">
    <location>
        <begin position="288"/>
        <end position="310"/>
    </location>
</feature>
<feature type="region of interest" description="Disordered" evidence="3">
    <location>
        <begin position="410"/>
        <end position="429"/>
    </location>
</feature>
<feature type="region of interest" description="Disordered" evidence="3">
    <location>
        <begin position="453"/>
        <end position="661"/>
    </location>
</feature>
<feature type="compositionally biased region" description="Basic and acidic residues" evidence="3">
    <location>
        <begin position="410"/>
        <end position="428"/>
    </location>
</feature>
<feature type="compositionally biased region" description="Basic and acidic residues" evidence="3">
    <location>
        <begin position="463"/>
        <end position="478"/>
    </location>
</feature>
<feature type="compositionally biased region" description="Basic and acidic residues" evidence="3">
    <location>
        <begin position="491"/>
        <end position="506"/>
    </location>
</feature>
<feature type="compositionally biased region" description="Acidic residues" evidence="3">
    <location>
        <begin position="595"/>
        <end position="607"/>
    </location>
</feature>
<feature type="compositionally biased region" description="Basic and acidic residues" evidence="3">
    <location>
        <begin position="628"/>
        <end position="639"/>
    </location>
</feature>
<feature type="modified residue" description="Phosphoserine" evidence="14">
    <location>
        <position position="487"/>
    </location>
</feature>
<feature type="modified residue" description="Omega-N-methylarginine" evidence="15">
    <location>
        <position position="559"/>
    </location>
</feature>
<feature type="modified residue" description="Phosphoserine" evidence="14">
    <location>
        <position position="594"/>
    </location>
</feature>
<feature type="disulfide bond" evidence="1">
    <location>
        <begin position="57"/>
        <end position="160"/>
    </location>
</feature>
<feature type="splice variant" id="VSP_061354" description="In isoform 3.">
    <location>
        <begin position="182"/>
        <end position="308"/>
    </location>
</feature>
<feature type="splice variant" id="VSP_061355" description="In isoform 4.">
    <location>
        <begin position="182"/>
        <end position="200"/>
    </location>
</feature>
<feature type="splice variant" id="VSP_061356" description="In isoform 7.">
    <location>
        <begin position="183"/>
        <end position="661"/>
    </location>
</feature>
<feature type="splice variant" id="VSP_061357" description="In isoform 5.">
    <location>
        <begin position="201"/>
        <end position="308"/>
    </location>
</feature>
<feature type="splice variant" id="VSP_061358" description="In isoform 2.">
    <original>LYEAGKAAKAGYPPSVSGVPGPYSIPSVPLGGAPSSGMLMDKPHPPPLAPSDSTGGSHSV</original>
    <variation>F</variation>
    <location>
        <begin position="250"/>
        <end position="309"/>
    </location>
</feature>
<feature type="splice variant" id="VSP_061359" description="In isoform 6.">
    <original>SQQRSKSEML</original>
    <variation>RVTFQPGCPL</variation>
    <location>
        <begin position="418"/>
        <end position="427"/>
    </location>
</feature>
<feature type="splice variant" id="VSP_061360" description="In isoform 6.">
    <location>
        <begin position="428"/>
        <end position="661"/>
    </location>
</feature>
<feature type="sequence conflict" description="In Ref. 1; ACH90403/ACH90404/ACH90405/ACH90406/ACH90407." evidence="12" ref="1">
    <original>T</original>
    <variation>A</variation>
    <location>
        <position position="587"/>
    </location>
</feature>
<feature type="sequence conflict" description="In Ref. 1; ACH90403/ACH90404/ACH90405/ACH90406/ACH90407." evidence="12" ref="1">
    <original>A</original>
    <variation>V</variation>
    <location>
        <position position="647"/>
    </location>
</feature>
<organism>
    <name type="scientific">Mus musculus</name>
    <name type="common">Mouse</name>
    <dbReference type="NCBI Taxonomy" id="10090"/>
    <lineage>
        <taxon>Eukaryota</taxon>
        <taxon>Metazoa</taxon>
        <taxon>Chordata</taxon>
        <taxon>Craniata</taxon>
        <taxon>Vertebrata</taxon>
        <taxon>Euteleostomi</taxon>
        <taxon>Mammalia</taxon>
        <taxon>Eutheria</taxon>
        <taxon>Euarchontoglires</taxon>
        <taxon>Glires</taxon>
        <taxon>Rodentia</taxon>
        <taxon>Myomorpha</taxon>
        <taxon>Muroidea</taxon>
        <taxon>Muridae</taxon>
        <taxon>Murinae</taxon>
        <taxon>Mus</taxon>
        <taxon>Mus</taxon>
    </lineage>
</organism>
<sequence length="661" mass="73235">MPAFPTLDLDGKLGKMDRVVLGWTAVFWLTAMVEGLQVTVPDKKKVAMLFQPTVLRCHFSTSSHQPAVVQWKFKSYCQDRMGESLGMSSPRAQALSKRNLEWDPYLDCLDSRRTVRVVASKQGSTVTLGDFYRGREITIVHDADLQIGKLMWGDSGLYYCIITTPDDLEGKNEDSVELLVLGRTGLLADLLPSFAVEIMPEWVFVGLVILGIFLFFVLVGICWCQCCPHSCCCYVRCPCCPDSCCCPQALYEAGKAAKAGYPPSVSGVPGPYSIPSVPLGGAPSSGMLMDKPHPPPLAPSDSTGGSHSVRKGYRIQADKERDSMKVLYYVEKELAQFDPARRMRGRYNNTISELSSLHDDDSNFRQSYHQMRNKQFPMSGDLESNPDYWSGVMGGNSGTNRGPALEYNKEDRESFRHSQQRSKSEMLSRKNFATGVPAVSMDELAAFADSYGQRSRRANGNSHEARAGSRFERSESRAHGAFYQDGSLDEYYGRGRSREPPGDGERGWTYSPAPARRRPPEDAPLPRLVSRTPGTAPKYDHSYLSSVLERQARPESSSRGGSLETPSKLGAQLGPRSASYYAWSPPTTYKAGASEGEDEDDAADEDALPPYSELELSRGELSRGPSYRGRDLSFHSNSEKRRKKEPAKKPGDFPTRMSLVV</sequence>
<comment type="function">
    <text evidence="4 5 6 7 8">May be involved in ER stress pathways with effects on lipid homeostasis and insulin secretion (PubMed:23826244, PubMed:33863978). With ILDR1 and LSR, involved in the maintain of the epithelial barrier function through the recruitment of MARVELD2/tricellulin to tricellular tight junctions (PubMed:23239027). Also functions as a B7-like protein family member expressed on immune cells and inflamed tissue and with T-cell inhibitory activity (PubMed:29431694). In the inner ear, may regulate alternative pre-mRNA splicing via binding to TRA2A, TRA2B and SRSF1 (PubMed:28785060).</text>
</comment>
<comment type="subunit">
    <text evidence="4 6 8">Interacts with MARVELD2 and OCLN (PubMed:23239027). Interacts with P4HB and HSPA5; the interaction with HSPA5 stabilizes ILDR2 expression (PubMed:33863978). Interacts (via C-terminus) with TRA2A, TRA2B and SRSF1 (PubMed:28785060).</text>
</comment>
<comment type="subcellular location">
    <subcellularLocation>
        <location evidence="5">Endoplasmic reticulum membrane</location>
        <topology evidence="5">Single-pass type I membrane protein</topology>
    </subcellularLocation>
    <subcellularLocation>
        <location evidence="4">Cell junction</location>
        <location evidence="4">Tight junction</location>
    </subcellularLocation>
    <subcellularLocation>
        <location evidence="6">Nucleus</location>
    </subcellularLocation>
</comment>
<comment type="alternative products">
    <event type="alternative splicing"/>
    <isoform>
        <id>B5TVM2-1</id>
        <name>1</name>
        <sequence type="displayed"/>
    </isoform>
    <isoform>
        <id>B5TVM2-2</id>
        <name>2</name>
        <sequence type="described" ref="VSP_061358"/>
    </isoform>
    <isoform>
        <id>B5TVM2-3</id>
        <name>3</name>
        <sequence type="described" ref="VSP_061354"/>
    </isoform>
    <isoform>
        <id>B5TVM2-4</id>
        <name>4</name>
        <sequence type="described" ref="VSP_061355"/>
    </isoform>
    <isoform>
        <id>B5TVM2-5</id>
        <name>5</name>
        <sequence type="described" ref="VSP_061357"/>
    </isoform>
    <isoform>
        <id>B5TVM2-6</id>
        <name>6</name>
        <sequence type="described" ref="VSP_061359 VSP_061360"/>
    </isoform>
    <isoform>
        <id>B5TVM2-7</id>
        <name>7</name>
        <sequence type="described" ref="VSP_061356"/>
    </isoform>
</comment>
<comment type="tissue specificity">
    <text evidence="4">Expressed in epithelial tissues, mainly in liver, kidney and colon.</text>
</comment>
<comment type="disruption phenotype">
    <text evidence="5">Steatotic liver with increased hepatic and circulating triglycerides and total cholesterol. Shows reduced expression of genes mediating synthesis and oxidation of hepatic lipids.</text>
</comment>
<comment type="similarity">
    <text evidence="12">Belongs to the immunoglobulin superfamily. LISCH7 family.</text>
</comment>
<comment type="caution">
    <text evidence="12">It is uncertain whether Met-1 or Met-16 is the initiator.</text>
</comment>
<reference key="1">
    <citation type="journal article" date="2008" name="PLoS Genet.">
        <title>Positional cloning of 'Lisch-Like', a candidate modifier of susceptibility to type 2 diabetes in mice.</title>
        <authorList>
            <person name="Dokmanovic-Chouinard M."/>
            <person name="Chung W.K."/>
            <person name="Chevre J.C."/>
            <person name="Watson E."/>
            <person name="Yonan J."/>
            <person name="Wiegand B."/>
            <person name="Bromberg Y."/>
            <person name="Wakae N."/>
            <person name="Wright C.V."/>
            <person name="Overton J."/>
            <person name="Ghosh S."/>
            <person name="Sathe G.M."/>
            <person name="Ammala C.E."/>
            <person name="Brown K.K."/>
            <person name="Ito R."/>
            <person name="LeDuc C."/>
            <person name="Solomon K."/>
            <person name="Fischer S.G."/>
            <person name="Leibel R.L."/>
        </authorList>
    </citation>
    <scope>NUCLEOTIDE SEQUENCE [MRNA]</scope>
    <source>
        <strain>BALB/cJ</strain>
        <tissue>Liver</tissue>
    </source>
</reference>
<reference key="2">
    <citation type="journal article" date="2009" name="PLoS Biol.">
        <title>Lineage-specific biology revealed by a finished genome assembly of the mouse.</title>
        <authorList>
            <person name="Church D.M."/>
            <person name="Goodstadt L."/>
            <person name="Hillier L.W."/>
            <person name="Zody M.C."/>
            <person name="Goldstein S."/>
            <person name="She X."/>
            <person name="Bult C.J."/>
            <person name="Agarwala R."/>
            <person name="Cherry J.L."/>
            <person name="DiCuccio M."/>
            <person name="Hlavina W."/>
            <person name="Kapustin Y."/>
            <person name="Meric P."/>
            <person name="Maglott D."/>
            <person name="Birtle Z."/>
            <person name="Marques A.C."/>
            <person name="Graves T."/>
            <person name="Zhou S."/>
            <person name="Teague B."/>
            <person name="Potamousis K."/>
            <person name="Churas C."/>
            <person name="Place M."/>
            <person name="Herschleb J."/>
            <person name="Runnheim R."/>
            <person name="Forrest D."/>
            <person name="Amos-Landgraf J."/>
            <person name="Schwartz D.C."/>
            <person name="Cheng Z."/>
            <person name="Lindblad-Toh K."/>
            <person name="Eichler E.E."/>
            <person name="Ponting C.P."/>
        </authorList>
    </citation>
    <scope>NUCLEOTIDE SEQUENCE [LARGE SCALE GENOMIC DNA]</scope>
    <source>
        <strain>C57BL/6J</strain>
    </source>
</reference>
<reference key="3">
    <citation type="journal article" date="2010" name="Cell">
        <title>A tissue-specific atlas of mouse protein phosphorylation and expression.</title>
        <authorList>
            <person name="Huttlin E.L."/>
            <person name="Jedrychowski M.P."/>
            <person name="Elias J.E."/>
            <person name="Goswami T."/>
            <person name="Rad R."/>
            <person name="Beausoleil S.A."/>
            <person name="Villen J."/>
            <person name="Haas W."/>
            <person name="Sowa M.E."/>
            <person name="Gygi S.P."/>
        </authorList>
    </citation>
    <scope>PHOSPHORYLATION [LARGE SCALE ANALYSIS] AT SER-487 AND SER-594</scope>
    <scope>IDENTIFICATION BY MASS SPECTROMETRY [LARGE SCALE ANALYSIS]</scope>
    <source>
        <tissue>Brain</tissue>
    </source>
</reference>
<reference key="4">
    <citation type="journal article" date="2013" name="PLoS ONE">
        <title>ILDR2: an endoplasmic reticulum resident molecule mediating hepatic lipid homeostasis.</title>
        <authorList>
            <person name="Watanabe K."/>
            <person name="Watson E."/>
            <person name="Cremona M.L."/>
            <person name="Millings E.J."/>
            <person name="Lefkowitch J.H."/>
            <person name="Fischer S.G."/>
            <person name="LeDuc C.A."/>
            <person name="Leibel R.L."/>
        </authorList>
    </citation>
    <scope>FUNCTION</scope>
    <scope>SUBCELLULAR LOCATION</scope>
    <scope>DISRUPTION PHENOTYPE</scope>
</reference>
<reference key="5">
    <citation type="journal article" date="2014" name="Mol. Cell. Proteomics">
        <title>Immunoaffinity enrichment and mass spectrometry analysis of protein methylation.</title>
        <authorList>
            <person name="Guo A."/>
            <person name="Gu H."/>
            <person name="Zhou J."/>
            <person name="Mulhern D."/>
            <person name="Wang Y."/>
            <person name="Lee K.A."/>
            <person name="Yang V."/>
            <person name="Aguiar M."/>
            <person name="Kornhauser J."/>
            <person name="Jia X."/>
            <person name="Ren J."/>
            <person name="Beausoleil S.A."/>
            <person name="Silva J.C."/>
            <person name="Vemulapalli V."/>
            <person name="Bedford M.T."/>
            <person name="Comb M.J."/>
        </authorList>
    </citation>
    <scope>METHYLATION [LARGE SCALE ANALYSIS] AT ARG-559</scope>
    <scope>IDENTIFICATION BY MASS SPECTROMETRY [LARGE SCALE ANALYSIS]</scope>
    <source>
        <tissue>Brain</tissue>
    </source>
</reference>
<reference key="6">
    <citation type="journal article" date="2013" name="J. Cell Sci.">
        <title>Analysis of the 'angulin' proteins LSR, ILDR1 and ILDR2--tricellulin recruitment, epithelial barrier function and implication in deafness pathogenesis.</title>
        <authorList>
            <person name="Higashi T."/>
            <person name="Tokuda S."/>
            <person name="Kitajiri S."/>
            <person name="Masuda S."/>
            <person name="Nakamura H."/>
            <person name="Oda Y."/>
            <person name="Furuse M."/>
        </authorList>
    </citation>
    <scope>FUNCTION</scope>
    <scope>SUBCELLULAR LOCATION</scope>
    <scope>TISSUE SPECIFICITY</scope>
    <scope>ALTERNATIVE SPLICING</scope>
    <scope>INTERACTION WITH MARVELD2 AND OCLN</scope>
</reference>
<reference key="7">
    <citation type="journal article" date="2017" name="Sci. Rep.">
        <title>Angulin proteins ILDR1 and ILDR2 regulate alternative pre-mRNA splicing through binding to splicing factors TRA2A, TRA2B, or SRSF1.</title>
        <authorList>
            <person name="Liu Y."/>
            <person name="Nie H."/>
            <person name="Liu C."/>
            <person name="Zhai X."/>
            <person name="Sang Q."/>
            <person name="Wang Y."/>
            <person name="Shi D."/>
            <person name="Wang L."/>
            <person name="Xu Z."/>
        </authorList>
    </citation>
    <scope>FUNCTION</scope>
    <scope>INTERACTION WITH TRA2A; TRA2B AND SRSF1</scope>
    <scope>SUBCELLULAR LOCATION</scope>
</reference>
<reference key="8">
    <citation type="journal article" date="2018" name="J. Immunol.">
        <title>ILDR2 Is a Novel B7-like Protein That Negatively Regulates T Cell Responses.</title>
        <authorList>
            <person name="Hecht I."/>
            <person name="Toporik A."/>
            <person name="Podojil J.R."/>
            <person name="Vaknin I."/>
            <person name="Cojocaru G."/>
            <person name="Oren A."/>
            <person name="Aizman E."/>
            <person name="Liang S.C."/>
            <person name="Leung L."/>
            <person name="Dicken Y."/>
            <person name="Novik A."/>
            <person name="Marbach-Bar N."/>
            <person name="Elmesmari A."/>
            <person name="Tange C."/>
            <person name="Gilmour A."/>
            <person name="McIntyre D."/>
            <person name="Kurowska-Stolarska M."/>
            <person name="McNamee K."/>
            <person name="Leitner J."/>
            <person name="Greenwald S."/>
            <person name="Dassa L."/>
            <person name="Levine Z."/>
            <person name="Steinberger P."/>
            <person name="Williams R.O."/>
            <person name="Miller S.D."/>
            <person name="McInnes I.B."/>
            <person name="Neria E."/>
            <person name="Rotman G."/>
        </authorList>
    </citation>
    <scope>FUNCTION</scope>
</reference>
<reference key="9">
    <citation type="journal article" date="2021" name="Sci. Rep.">
        <title>ILDR2 stabilization is regulated by its interaction with GRP78.</title>
        <authorList>
            <person name="Watanabe K."/>
            <person name="Nakayama K."/>
            <person name="Ohta S."/>
            <person name="Matsumoto A."/>
            <person name="Tsuda H."/>
            <person name="Iwamoto S."/>
        </authorList>
    </citation>
    <scope>INTERACTION WITH P4HB AND HSPA5</scope>
    <scope>FUNCTION</scope>
</reference>
<gene>
    <name evidence="13" type="primary">Ildr2</name>
    <name type="synonym">D1Ertd471e</name>
    <name type="synonym">Ll</name>
</gene>
<evidence type="ECO:0000250" key="1"/>
<evidence type="ECO:0000255" key="2"/>
<evidence type="ECO:0000256" key="3">
    <source>
        <dbReference type="SAM" id="MobiDB-lite"/>
    </source>
</evidence>
<evidence type="ECO:0000269" key="4">
    <source>
    </source>
</evidence>
<evidence type="ECO:0000269" key="5">
    <source>
    </source>
</evidence>
<evidence type="ECO:0000269" key="6">
    <source>
    </source>
</evidence>
<evidence type="ECO:0000269" key="7">
    <source>
    </source>
</evidence>
<evidence type="ECO:0000269" key="8">
    <source>
    </source>
</evidence>
<evidence type="ECO:0000303" key="9">
    <source>
    </source>
</evidence>
<evidence type="ECO:0000303" key="10">
    <source>
    </source>
</evidence>
<evidence type="ECO:0000303" key="11">
    <source>
    </source>
</evidence>
<evidence type="ECO:0000305" key="12"/>
<evidence type="ECO:0000312" key="13">
    <source>
        <dbReference type="MGI" id="MGI:1196370"/>
    </source>
</evidence>
<evidence type="ECO:0007744" key="14">
    <source>
    </source>
</evidence>
<evidence type="ECO:0007744" key="15">
    <source>
    </source>
</evidence>
<keyword id="KW-0025">Alternative splicing</keyword>
<keyword id="KW-0965">Cell junction</keyword>
<keyword id="KW-1015">Disulfide bond</keyword>
<keyword id="KW-0256">Endoplasmic reticulum</keyword>
<keyword id="KW-0393">Immunoglobulin domain</keyword>
<keyword id="KW-0472">Membrane</keyword>
<keyword id="KW-0488">Methylation</keyword>
<keyword id="KW-0539">Nucleus</keyword>
<keyword id="KW-0597">Phosphoprotein</keyword>
<keyword id="KW-1185">Reference proteome</keyword>
<keyword id="KW-0732">Signal</keyword>
<keyword id="KW-0796">Tight junction</keyword>
<keyword id="KW-0812">Transmembrane</keyword>
<keyword id="KW-1133">Transmembrane helix</keyword>
<dbReference type="EMBL" id="FJ024494">
    <property type="protein sequence ID" value="ACH90402.1"/>
    <property type="molecule type" value="mRNA"/>
</dbReference>
<dbReference type="EMBL" id="FJ024495">
    <property type="protein sequence ID" value="ACH90403.1"/>
    <property type="molecule type" value="mRNA"/>
</dbReference>
<dbReference type="EMBL" id="FJ024496">
    <property type="protein sequence ID" value="ACH90404.1"/>
    <property type="molecule type" value="mRNA"/>
</dbReference>
<dbReference type="EMBL" id="FJ024497">
    <property type="protein sequence ID" value="ACH90405.1"/>
    <property type="molecule type" value="mRNA"/>
</dbReference>
<dbReference type="EMBL" id="FJ024498">
    <property type="protein sequence ID" value="ACH90406.1"/>
    <property type="molecule type" value="mRNA"/>
</dbReference>
<dbReference type="EMBL" id="FJ024499">
    <property type="protein sequence ID" value="ACH90407.1"/>
    <property type="molecule type" value="mRNA"/>
</dbReference>
<dbReference type="EMBL" id="FJ024500">
    <property type="protein sequence ID" value="ACH90408.1"/>
    <property type="molecule type" value="mRNA"/>
</dbReference>
<dbReference type="EMBL" id="FJ024501">
    <property type="protein sequence ID" value="ACH90409.1"/>
    <property type="molecule type" value="mRNA"/>
</dbReference>
<dbReference type="EMBL" id="AC034122">
    <property type="status" value="NOT_ANNOTATED_CDS"/>
    <property type="molecule type" value="Genomic_DNA"/>
</dbReference>
<dbReference type="CCDS" id="CCDS48431.1">
    <molecule id="B5TVM2-1"/>
</dbReference>
<dbReference type="CCDS" id="CCDS87912.1">
    <molecule id="B5TVM2-6"/>
</dbReference>
<dbReference type="CCDS" id="CCDS87913.1">
    <molecule id="B5TVM2-2"/>
</dbReference>
<dbReference type="CCDS" id="CCDS87914.1">
    <molecule id="B5TVM2-5"/>
</dbReference>
<dbReference type="CCDS" id="CCDS87915.1">
    <molecule id="B5TVM2-4"/>
</dbReference>
<dbReference type="CCDS" id="CCDS87916.1">
    <molecule id="B5TVM2-3"/>
</dbReference>
<dbReference type="RefSeq" id="NP_001158000.1">
    <molecule id="B5TVM2-1"/>
    <property type="nucleotide sequence ID" value="NM_001164528.1"/>
</dbReference>
<dbReference type="RefSeq" id="NP_001344357.1">
    <molecule id="B5TVM2-2"/>
    <property type="nucleotide sequence ID" value="NM_001357428.1"/>
</dbReference>
<dbReference type="RefSeq" id="NP_001344358.1">
    <molecule id="B5TVM2-3"/>
    <property type="nucleotide sequence ID" value="NM_001357429.1"/>
</dbReference>
<dbReference type="RefSeq" id="NP_001344359.1">
    <molecule id="B5TVM2-4"/>
    <property type="nucleotide sequence ID" value="NM_001357430.1"/>
</dbReference>
<dbReference type="RefSeq" id="NP_001344360.1">
    <molecule id="B5TVM2-5"/>
    <property type="nucleotide sequence ID" value="NM_001357431.1"/>
</dbReference>
<dbReference type="BioGRID" id="783207">
    <property type="interactions" value="15"/>
</dbReference>
<dbReference type="FunCoup" id="B5TVM2">
    <property type="interactions" value="83"/>
</dbReference>
<dbReference type="IntAct" id="B5TVM2">
    <property type="interactions" value="1"/>
</dbReference>
<dbReference type="MINT" id="B5TVM2"/>
<dbReference type="STRING" id="10090.ENSMUSP00000107047"/>
<dbReference type="GlyGen" id="B5TVM2">
    <property type="glycosylation" value="1 site, 1 N-linked glycan (1 site)"/>
</dbReference>
<dbReference type="iPTMnet" id="B5TVM2"/>
<dbReference type="PhosphoSitePlus" id="B5TVM2"/>
<dbReference type="SwissPalm" id="B5TVM2"/>
<dbReference type="PaxDb" id="10090-ENSMUSP00000107047"/>
<dbReference type="PeptideAtlas" id="B5TVM2"/>
<dbReference type="ProteomicsDB" id="266974"/>
<dbReference type="Antibodypedia" id="2487">
    <property type="antibodies" value="43 antibodies from 10 providers"/>
</dbReference>
<dbReference type="Ensembl" id="ENSMUST00000111416.7">
    <molecule id="B5TVM2-1"/>
    <property type="protein sequence ID" value="ENSMUSP00000107047.2"/>
    <property type="gene ID" value="ENSMUSG00000040612.14"/>
</dbReference>
<dbReference type="Ensembl" id="ENSMUST00000192638.6">
    <molecule id="B5TVM2-4"/>
    <property type="protein sequence ID" value="ENSMUSP00000142311.2"/>
    <property type="gene ID" value="ENSMUSG00000040612.14"/>
</dbReference>
<dbReference type="Ensembl" id="ENSMUST00000192732.6">
    <molecule id="B5TVM2-3"/>
    <property type="protein sequence ID" value="ENSMUSP00000141502.2"/>
    <property type="gene ID" value="ENSMUSG00000040612.14"/>
</dbReference>
<dbReference type="Ensembl" id="ENSMUST00000193860.2">
    <molecule id="B5TVM2-5"/>
    <property type="protein sequence ID" value="ENSMUSP00000141323.2"/>
    <property type="gene ID" value="ENSMUSG00000040612.14"/>
</dbReference>
<dbReference type="Ensembl" id="ENSMUST00000194964.6">
    <molecule id="B5TVM2-2"/>
    <property type="protein sequence ID" value="ENSMUSP00000142152.2"/>
    <property type="gene ID" value="ENSMUSG00000040612.14"/>
</dbReference>
<dbReference type="GeneID" id="100039795"/>
<dbReference type="KEGG" id="mmu:100039795"/>
<dbReference type="UCSC" id="uc011wvd.1">
    <molecule id="B5TVM2-1"/>
    <property type="organism name" value="mouse"/>
</dbReference>
<dbReference type="AGR" id="MGI:1196370"/>
<dbReference type="CTD" id="387597"/>
<dbReference type="MGI" id="MGI:1196370">
    <property type="gene designation" value="Ildr2"/>
</dbReference>
<dbReference type="VEuPathDB" id="HostDB:ENSMUSG00000040612"/>
<dbReference type="eggNOG" id="ENOG502QSI2">
    <property type="taxonomic scope" value="Eukaryota"/>
</dbReference>
<dbReference type="GeneTree" id="ENSGT00950000183058"/>
<dbReference type="HOGENOM" id="CLU_028969_0_0_1"/>
<dbReference type="InParanoid" id="B5TVM2"/>
<dbReference type="OMA" id="FRHXNDF"/>
<dbReference type="OrthoDB" id="9450321at2759"/>
<dbReference type="PhylomeDB" id="B5TVM2"/>
<dbReference type="TreeFam" id="TF330877"/>
<dbReference type="BioGRID-ORCS" id="100039795">
    <property type="hits" value="4 hits in 77 CRISPR screens"/>
</dbReference>
<dbReference type="CD-CODE" id="CE726F99">
    <property type="entry name" value="Postsynaptic density"/>
</dbReference>
<dbReference type="PRO" id="PR:B5TVM2"/>
<dbReference type="Proteomes" id="UP000000589">
    <property type="component" value="Chromosome 1"/>
</dbReference>
<dbReference type="RNAct" id="B5TVM2">
    <property type="molecule type" value="protein"/>
</dbReference>
<dbReference type="Bgee" id="ENSMUSG00000040612">
    <property type="expression patterns" value="Expressed in median eminence of neurohypophysis and 193 other cell types or tissues"/>
</dbReference>
<dbReference type="ExpressionAtlas" id="B5TVM2">
    <property type="expression patterns" value="baseline and differential"/>
</dbReference>
<dbReference type="GO" id="GO:0005923">
    <property type="term" value="C:bicellular tight junction"/>
    <property type="evidence" value="ECO:0007669"/>
    <property type="project" value="UniProtKB-SubCell"/>
</dbReference>
<dbReference type="GO" id="GO:0005789">
    <property type="term" value="C:endoplasmic reticulum membrane"/>
    <property type="evidence" value="ECO:0007669"/>
    <property type="project" value="UniProtKB-SubCell"/>
</dbReference>
<dbReference type="GO" id="GO:0005634">
    <property type="term" value="C:nucleus"/>
    <property type="evidence" value="ECO:0007669"/>
    <property type="project" value="UniProtKB-SubCell"/>
</dbReference>
<dbReference type="GO" id="GO:0070160">
    <property type="term" value="C:tight junction"/>
    <property type="evidence" value="ECO:0000314"/>
    <property type="project" value="UniProtKB"/>
</dbReference>
<dbReference type="GO" id="GO:0030154">
    <property type="term" value="P:cell differentiation"/>
    <property type="evidence" value="ECO:0000315"/>
    <property type="project" value="MGI"/>
</dbReference>
<dbReference type="GO" id="GO:0048873">
    <property type="term" value="P:homeostasis of number of cells within a tissue"/>
    <property type="evidence" value="ECO:0000315"/>
    <property type="project" value="MGI"/>
</dbReference>
<dbReference type="GO" id="GO:0030073">
    <property type="term" value="P:insulin secretion"/>
    <property type="evidence" value="ECO:0000315"/>
    <property type="project" value="MGI"/>
</dbReference>
<dbReference type="GO" id="GO:0050868">
    <property type="term" value="P:negative regulation of T cell activation"/>
    <property type="evidence" value="ECO:0000314"/>
    <property type="project" value="UniProtKB"/>
</dbReference>
<dbReference type="GO" id="GO:0031016">
    <property type="term" value="P:pancreas development"/>
    <property type="evidence" value="ECO:0000315"/>
    <property type="project" value="MGI"/>
</dbReference>
<dbReference type="GO" id="GO:0043484">
    <property type="term" value="P:regulation of RNA splicing"/>
    <property type="evidence" value="ECO:0000315"/>
    <property type="project" value="UniProtKB"/>
</dbReference>
<dbReference type="GO" id="GO:0009749">
    <property type="term" value="P:response to glucose"/>
    <property type="evidence" value="ECO:0000315"/>
    <property type="project" value="MGI"/>
</dbReference>
<dbReference type="Gene3D" id="2.60.40.10">
    <property type="entry name" value="Immunoglobulins"/>
    <property type="match status" value="1"/>
</dbReference>
<dbReference type="InterPro" id="IPR036179">
    <property type="entry name" value="Ig-like_dom_sf"/>
</dbReference>
<dbReference type="InterPro" id="IPR051874">
    <property type="entry name" value="Ig-like_domain-LISCH7"/>
</dbReference>
<dbReference type="InterPro" id="IPR013783">
    <property type="entry name" value="Ig-like_fold"/>
</dbReference>
<dbReference type="InterPro" id="IPR003599">
    <property type="entry name" value="Ig_sub"/>
</dbReference>
<dbReference type="InterPro" id="IPR008664">
    <property type="entry name" value="LISCH7"/>
</dbReference>
<dbReference type="PANTHER" id="PTHR15923:SF0">
    <property type="entry name" value="IMMUNOGLOBULIN-LIKE DOMAIN-CONTAINING RECEPTOR 2"/>
    <property type="match status" value="1"/>
</dbReference>
<dbReference type="PANTHER" id="PTHR15923">
    <property type="entry name" value="TRANSMEMBRANE AND IMMUNOGLOBULIN DOMAIN-CONTAINING PROTEIN"/>
    <property type="match status" value="1"/>
</dbReference>
<dbReference type="Pfam" id="PF05624">
    <property type="entry name" value="LSR"/>
    <property type="match status" value="1"/>
</dbReference>
<dbReference type="SMART" id="SM00409">
    <property type="entry name" value="IG"/>
    <property type="match status" value="1"/>
</dbReference>
<dbReference type="SUPFAM" id="SSF48726">
    <property type="entry name" value="Immunoglobulin"/>
    <property type="match status" value="1"/>
</dbReference>
<accession>B5TVM2</accession>
<accession>B5TVM3</accession>
<accession>B5TVM4</accession>
<accession>B5TVM5</accession>
<accession>B5TVM6</accession>
<accession>B5TVM7</accession>
<accession>B5TVM8</accession>
<accession>B5TVM9</accession>
<accession>E9Q9U5</accession>
<protein>
    <recommendedName>
        <fullName evidence="12">Immunoglobulin-like domain-containing receptor 2</fullName>
    </recommendedName>
    <alternativeName>
        <fullName evidence="10 11">Angulin-3</fullName>
    </alternativeName>
    <alternativeName>
        <fullName evidence="9">Lisch-like protein</fullName>
    </alternativeName>
</protein>